<sequence length="317" mass="35195">MAFRIPFAQSFWQEYLSGQEANLPRLPEVEQVTETVMRILGGNPGRMQLQGTNTYLVGTGKFRILIDTGQGEASWIEALTKQLEANGLEISHVLLTHWHGDHTGGVPDLITYNPELSSRVYKNTPDLGQQAIHDGQKFHVEGATIRAVFTPGHAFDHMCFLLEEENALFTGDNVLGHGYSVVEDLGTYMTSLTRMADLNCALGYPAHGTRIEDLPAKMKEYIQHKESRMRQVLAALERSRARMTATGGGRRAGALTFPELINSMYGGIPDEIEQALTPFLSQVLWKLAEDRKVGFEGEPSQRRWFAVGPPAATAVRL</sequence>
<protein>
    <recommendedName>
        <fullName evidence="4">Lactamase-like protein adaB</fullName>
        <ecNumber evidence="3">3.1.-.-</ecNumber>
    </recommendedName>
    <alternativeName>
        <fullName evidence="4">2-acetyl-2-decarboxamidoanthrotainin biosynthesis cluster protein B</fullName>
    </alternativeName>
</protein>
<comment type="function">
    <text evidence="3">Lactamase-like protein; part of the gene cluster that mediates the biosynthesis of the linear tetracyclic TAN-1612 neuropeptide Y receptor antagonist (PubMed:21866960). The decaketide backbone of TAN-1612 is synthesized by the non-reducing polyketide synthase adaA via condensation of one acetyl-CoA starter unit with 9 malonyl-CoA units. The FAD-dependent monooxygenase adaC then performs hydroxylation at C2 while the polaketide chain is still attached to the NRPKS adaA (PubMed:21866960). The alpha-hydroxylation step at C2 appears to be crucial for the following C18-C1 Claisen cyclization and release of the C9-hydroxyl version of TAN-1612 from the NRPKS adaA, two steps performed by the lactamase-like protein adaB (PubMed:21866960). Finally, the O-methyltransferase adaD performs the C9 O-methylation to complete the biosynthesis of TAN-1612 (PubMed:21866960).</text>
</comment>
<comment type="catalytic activity">
    <reaction evidence="3">
        <text>3-(2,4-dioxopentyl)-2,3,6,8,9-pentahydroxy-1-oxo-1,2,3,4-tetrahydroanthracene-2-carboxyl-[ACP] = 2-acetyl-3,4a,8,10,11,12a-hexahydroxy-1,4,4a,5,12,12a-hexahydrotetracene-1,12-dione + holo-[ACP] + H(+)</text>
        <dbReference type="Rhea" id="RHEA:64096"/>
        <dbReference type="Rhea" id="RHEA-COMP:9685"/>
        <dbReference type="Rhea" id="RHEA-COMP:16520"/>
        <dbReference type="ChEBI" id="CHEBI:15378"/>
        <dbReference type="ChEBI" id="CHEBI:64479"/>
        <dbReference type="ChEBI" id="CHEBI:146218"/>
        <dbReference type="ChEBI" id="CHEBI:149688"/>
    </reaction>
    <physiologicalReaction direction="left-to-right" evidence="3">
        <dbReference type="Rhea" id="RHEA:64097"/>
    </physiologicalReaction>
</comment>
<comment type="cofactor">
    <cofactor evidence="1">
        <name>Zn(2+)</name>
        <dbReference type="ChEBI" id="CHEBI:29105"/>
    </cofactor>
    <text evidence="1">Binds 2 Zn(2+) ions per subunit.</text>
</comment>
<comment type="pathway">
    <text evidence="3">Secondary metabolite biosynthesis.</text>
</comment>
<comment type="similarity">
    <text evidence="5">Belongs to the metallo-beta-lactamase superfamily.</text>
</comment>
<reference key="1">
    <citation type="journal article" date="2007" name="Nat. Biotechnol.">
        <title>Genome sequencing and analysis of the versatile cell factory Aspergillus niger CBS 513.88.</title>
        <authorList>
            <person name="Pel H.J."/>
            <person name="de Winde J.H."/>
            <person name="Archer D.B."/>
            <person name="Dyer P.S."/>
            <person name="Hofmann G."/>
            <person name="Schaap P.J."/>
            <person name="Turner G."/>
            <person name="de Vries R.P."/>
            <person name="Albang R."/>
            <person name="Albermann K."/>
            <person name="Andersen M.R."/>
            <person name="Bendtsen J.D."/>
            <person name="Benen J.A.E."/>
            <person name="van den Berg M."/>
            <person name="Breestraat S."/>
            <person name="Caddick M.X."/>
            <person name="Contreras R."/>
            <person name="Cornell M."/>
            <person name="Coutinho P.M."/>
            <person name="Danchin E.G.J."/>
            <person name="Debets A.J.M."/>
            <person name="Dekker P."/>
            <person name="van Dijck P.W.M."/>
            <person name="van Dijk A."/>
            <person name="Dijkhuizen L."/>
            <person name="Driessen A.J.M."/>
            <person name="d'Enfert C."/>
            <person name="Geysens S."/>
            <person name="Goosen C."/>
            <person name="Groot G.S.P."/>
            <person name="de Groot P.W.J."/>
            <person name="Guillemette T."/>
            <person name="Henrissat B."/>
            <person name="Herweijer M."/>
            <person name="van den Hombergh J.P.T.W."/>
            <person name="van den Hondel C.A.M.J.J."/>
            <person name="van der Heijden R.T.J.M."/>
            <person name="van der Kaaij R.M."/>
            <person name="Klis F.M."/>
            <person name="Kools H.J."/>
            <person name="Kubicek C.P."/>
            <person name="van Kuyk P.A."/>
            <person name="Lauber J."/>
            <person name="Lu X."/>
            <person name="van der Maarel M.J.E.C."/>
            <person name="Meulenberg R."/>
            <person name="Menke H."/>
            <person name="Mortimer M.A."/>
            <person name="Nielsen J."/>
            <person name="Oliver S.G."/>
            <person name="Olsthoorn M."/>
            <person name="Pal K."/>
            <person name="van Peij N.N.M.E."/>
            <person name="Ram A.F.J."/>
            <person name="Rinas U."/>
            <person name="Roubos J.A."/>
            <person name="Sagt C.M.J."/>
            <person name="Schmoll M."/>
            <person name="Sun J."/>
            <person name="Ussery D."/>
            <person name="Varga J."/>
            <person name="Vervecken W."/>
            <person name="van de Vondervoort P.J.J."/>
            <person name="Wedler H."/>
            <person name="Woesten H.A.B."/>
            <person name="Zeng A.-P."/>
            <person name="van Ooyen A.J.J."/>
            <person name="Visser J."/>
            <person name="Stam H."/>
        </authorList>
    </citation>
    <scope>NUCLEOTIDE SEQUENCE [LARGE SCALE GENOMIC DNA]</scope>
    <source>
        <strain>ATCC MYA-4892 / CBS 513.88 / FGSC A1513</strain>
    </source>
</reference>
<reference key="2">
    <citation type="journal article" date="2011" name="J. Am. Chem. Soc.">
        <title>Comparative characterization of fungal anthracenone and naphthacenedione biosynthetic pathways reveals an alpha-hydroxylation-dependent Claisen-like cyclization catalyzed by a dimanganese thioesterase.</title>
        <authorList>
            <person name="Li Y."/>
            <person name="Chooi Y.H."/>
            <person name="Sheng Y."/>
            <person name="Valentine J.S."/>
            <person name="Tang Y."/>
        </authorList>
    </citation>
    <scope>IDENTIFICATION</scope>
    <scope>FUNCTION</scope>
    <scope>CATALYTIC ACTIVITY</scope>
    <scope>PATHWAY</scope>
</reference>
<proteinExistence type="evidence at protein level"/>
<evidence type="ECO:0000250" key="1">
    <source>
        <dbReference type="UniProtKB" id="Q988B9"/>
    </source>
</evidence>
<evidence type="ECO:0000255" key="2"/>
<evidence type="ECO:0000269" key="3">
    <source>
    </source>
</evidence>
<evidence type="ECO:0000303" key="4">
    <source>
    </source>
</evidence>
<evidence type="ECO:0000305" key="5"/>
<gene>
    <name evidence="4" type="primary">adaB</name>
    <name type="ORF">An11g07320</name>
</gene>
<dbReference type="EC" id="3.1.-.-" evidence="3"/>
<dbReference type="EMBL" id="AM270243">
    <property type="protein sequence ID" value="CAK40779.1"/>
    <property type="molecule type" value="Genomic_DNA"/>
</dbReference>
<dbReference type="RefSeq" id="XP_001394706.1">
    <property type="nucleotide sequence ID" value="XM_001394669.1"/>
</dbReference>
<dbReference type="SMR" id="A2QX23"/>
<dbReference type="EnsemblFungi" id="CAK40779">
    <property type="protein sequence ID" value="CAK40779"/>
    <property type="gene ID" value="An11g07320"/>
</dbReference>
<dbReference type="GeneID" id="4984952"/>
<dbReference type="KEGG" id="ang:An11g07320"/>
<dbReference type="VEuPathDB" id="FungiDB:An11g07320"/>
<dbReference type="HOGENOM" id="CLU_048478_1_0_1"/>
<dbReference type="Proteomes" id="UP000006706">
    <property type="component" value="Chromosome 7R"/>
</dbReference>
<dbReference type="GO" id="GO:0016787">
    <property type="term" value="F:hydrolase activity"/>
    <property type="evidence" value="ECO:0007669"/>
    <property type="project" value="UniProtKB-KW"/>
</dbReference>
<dbReference type="GO" id="GO:0046872">
    <property type="term" value="F:metal ion binding"/>
    <property type="evidence" value="ECO:0007669"/>
    <property type="project" value="UniProtKB-KW"/>
</dbReference>
<dbReference type="GO" id="GO:0044550">
    <property type="term" value="P:secondary metabolite biosynthetic process"/>
    <property type="evidence" value="ECO:0007669"/>
    <property type="project" value="UniProtKB-ARBA"/>
</dbReference>
<dbReference type="CDD" id="cd07722">
    <property type="entry name" value="LACTB2-like_MBL-fold"/>
    <property type="match status" value="1"/>
</dbReference>
<dbReference type="FunFam" id="3.60.15.10:FF:000041">
    <property type="entry name" value="Metallo-beta-lactamase domain protein"/>
    <property type="match status" value="1"/>
</dbReference>
<dbReference type="Gene3D" id="3.60.15.10">
    <property type="entry name" value="Ribonuclease Z/Hydroxyacylglutathione hydrolase-like"/>
    <property type="match status" value="1"/>
</dbReference>
<dbReference type="Gene3D" id="1.10.10.10">
    <property type="entry name" value="Winged helix-like DNA-binding domain superfamily/Winged helix DNA-binding domain"/>
    <property type="match status" value="1"/>
</dbReference>
<dbReference type="InterPro" id="IPR047921">
    <property type="entry name" value="LACTB2-like_MBL-fold"/>
</dbReference>
<dbReference type="InterPro" id="IPR001279">
    <property type="entry name" value="Metallo-B-lactamas"/>
</dbReference>
<dbReference type="InterPro" id="IPR036866">
    <property type="entry name" value="RibonucZ/Hydroxyglut_hydro"/>
</dbReference>
<dbReference type="InterPro" id="IPR050662">
    <property type="entry name" value="Sec-metab_biosynth-thioest"/>
</dbReference>
<dbReference type="InterPro" id="IPR036388">
    <property type="entry name" value="WH-like_DNA-bd_sf"/>
</dbReference>
<dbReference type="PANTHER" id="PTHR23131">
    <property type="entry name" value="ENDORIBONUCLEASE LACTB2"/>
    <property type="match status" value="1"/>
</dbReference>
<dbReference type="PANTHER" id="PTHR23131:SF2">
    <property type="entry name" value="LACTAMASE-LIKE PROTEIN APTB-RELATED"/>
    <property type="match status" value="1"/>
</dbReference>
<dbReference type="Pfam" id="PF00753">
    <property type="entry name" value="Lactamase_B"/>
    <property type="match status" value="1"/>
</dbReference>
<dbReference type="SMART" id="SM00849">
    <property type="entry name" value="Lactamase_B"/>
    <property type="match status" value="1"/>
</dbReference>
<dbReference type="SUPFAM" id="SSF56281">
    <property type="entry name" value="Metallo-hydrolase/oxidoreductase"/>
    <property type="match status" value="1"/>
</dbReference>
<organism>
    <name type="scientific">Aspergillus niger (strain ATCC MYA-4892 / CBS 513.88 / FGSC A1513)</name>
    <dbReference type="NCBI Taxonomy" id="425011"/>
    <lineage>
        <taxon>Eukaryota</taxon>
        <taxon>Fungi</taxon>
        <taxon>Dikarya</taxon>
        <taxon>Ascomycota</taxon>
        <taxon>Pezizomycotina</taxon>
        <taxon>Eurotiomycetes</taxon>
        <taxon>Eurotiomycetidae</taxon>
        <taxon>Eurotiales</taxon>
        <taxon>Aspergillaceae</taxon>
        <taxon>Aspergillus</taxon>
        <taxon>Aspergillus subgen. Circumdati</taxon>
    </lineage>
</organism>
<keyword id="KW-0378">Hydrolase</keyword>
<keyword id="KW-0479">Metal-binding</keyword>
<keyword id="KW-1185">Reference proteome</keyword>
<keyword id="KW-0862">Zinc</keyword>
<name>ADAB_ASPNC</name>
<feature type="chain" id="PRO_0000446350" description="Lactamase-like protein adaB">
    <location>
        <begin position="1"/>
        <end position="317"/>
    </location>
</feature>
<feature type="active site" description="Proton donor/acceptor" evidence="2">
    <location>
        <position position="101"/>
    </location>
</feature>
<feature type="binding site" evidence="1">
    <location>
        <position position="97"/>
    </location>
    <ligand>
        <name>Zn(2+)</name>
        <dbReference type="ChEBI" id="CHEBI:29105"/>
        <label>1</label>
        <note>catalytic</note>
    </ligand>
</feature>
<feature type="binding site" evidence="1">
    <location>
        <position position="99"/>
    </location>
    <ligand>
        <name>Zn(2+)</name>
        <dbReference type="ChEBI" id="CHEBI:29105"/>
        <label>1</label>
        <note>catalytic</note>
    </ligand>
</feature>
<feature type="binding site" evidence="1">
    <location>
        <position position="101"/>
    </location>
    <ligand>
        <name>Zn(2+)</name>
        <dbReference type="ChEBI" id="CHEBI:29105"/>
        <label>2</label>
        <note>catalytic</note>
    </ligand>
</feature>
<feature type="binding site" evidence="1">
    <location>
        <position position="102"/>
    </location>
    <ligand>
        <name>Zn(2+)</name>
        <dbReference type="ChEBI" id="CHEBI:29105"/>
        <label>2</label>
        <note>catalytic</note>
    </ligand>
</feature>
<accession>A2QX23</accession>